<comment type="function">
    <text evidence="2">Extracellular lectin functioning as a pattern-recognition receptor in innate immunity. Binds the sugar moieties of pathogen-associated molecular patterns (PAMPs) displayed on microbes and activates the lectin pathway of the complement system. May also activate monocytes through a G protein-coupled receptor, FFAR2, inducing the secretion of interleukin-8/IL-8. Binds preferentially to 9-O-acetylated 2-6-linked sialic acid derivatives and to various glycans containing sialic acid engaged in a 2-3 linkage (By similarity).</text>
</comment>
<comment type="subunit">
    <text evidence="2">Homotrimer. Interacts with elastin/ELN. Interacts (via Fibrinogen C-terminal domain) with FFAR2. Interacts with CRP; may regulate monocyte activation by FCN1.</text>
</comment>
<comment type="subcellular location">
    <subcellularLocation>
        <location evidence="2">Secreted</location>
    </subcellularLocation>
    <subcellularLocation>
        <location evidence="2">Cell membrane</location>
        <topology evidence="2">Peripheral membrane protein</topology>
        <orientation evidence="2">Extracellular side</orientation>
    </subcellularLocation>
    <text evidence="2">Found on the monocyte and granulocyte surface.</text>
</comment>
<comment type="domain">
    <text evidence="2">The fibrinogen C-terminal domain mediates calcium-dependent binding to carbohydrates and tethering to the cell surface in monocytes and granulocytes. The domain undergoes a conformational switch at pH under 6.2, and looses its carbohydrate-binding ability.</text>
</comment>
<comment type="similarity">
    <text evidence="6">Belongs to the ficolin lectin family.</text>
</comment>
<feature type="signal peptide" evidence="1">
    <location>
        <begin position="1"/>
        <end position="17"/>
    </location>
</feature>
<feature type="chain" id="PRO_0000009138" description="Ficolin-1">
    <location>
        <begin position="18"/>
        <end position="335"/>
    </location>
</feature>
<feature type="domain" description="Collagen-like">
    <location>
        <begin position="50"/>
        <end position="88"/>
    </location>
</feature>
<feature type="domain" description="Fibrinogen C-terminal" evidence="4">
    <location>
        <begin position="117"/>
        <end position="335"/>
    </location>
</feature>
<feature type="region of interest" description="Disordered" evidence="5">
    <location>
        <begin position="47"/>
        <end position="114"/>
    </location>
</feature>
<feature type="region of interest" description="A domain; contributes to trimerization" evidence="1">
    <location>
        <begin position="123"/>
        <end position="162"/>
    </location>
</feature>
<feature type="region of interest" description="B domain; contributes to trimerization" evidence="1">
    <location>
        <begin position="163"/>
        <end position="251"/>
    </location>
</feature>
<feature type="region of interest" description="P domain" evidence="2">
    <location>
        <begin position="326"/>
        <end position="335"/>
    </location>
</feature>
<feature type="compositionally biased region" description="Low complexity" evidence="5">
    <location>
        <begin position="75"/>
        <end position="88"/>
    </location>
</feature>
<feature type="binding site" evidence="2">
    <location>
        <position position="270"/>
    </location>
    <ligand>
        <name>Ca(2+)</name>
        <dbReference type="ChEBI" id="CHEBI:29108"/>
    </ligand>
</feature>
<feature type="binding site" evidence="2">
    <location>
        <position position="272"/>
    </location>
    <ligand>
        <name>Ca(2+)</name>
        <dbReference type="ChEBI" id="CHEBI:29108"/>
    </ligand>
</feature>
<feature type="binding site" evidence="2">
    <location>
        <begin position="291"/>
        <end position="293"/>
    </location>
    <ligand>
        <name>a carbohydrate</name>
        <dbReference type="ChEBI" id="CHEBI:16646"/>
    </ligand>
</feature>
<feature type="site" description="Mediates specificity for sialic acids" evidence="2">
    <location>
        <position position="309"/>
    </location>
</feature>
<feature type="glycosylation site" description="N-linked (GlcNAc...) asparagine" evidence="3">
    <location>
        <position position="271"/>
    </location>
</feature>
<feature type="disulfide bond" evidence="4">
    <location>
        <begin position="119"/>
        <end position="147"/>
    </location>
</feature>
<feature type="disulfide bond" evidence="4">
    <location>
        <begin position="126"/>
        <end position="154"/>
    </location>
</feature>
<feature type="disulfide bond" evidence="4">
    <location>
        <begin position="279"/>
        <end position="292"/>
    </location>
</feature>
<name>FCN1_RAT</name>
<protein>
    <recommendedName>
        <fullName>Ficolin-1</fullName>
    </recommendedName>
    <alternativeName>
        <fullName>Collagen/fibrinogen domain-containing protein 1</fullName>
    </alternativeName>
    <alternativeName>
        <fullName>Ficolin-A</fullName>
    </alternativeName>
    <alternativeName>
        <fullName>Ficolin-alpha</fullName>
    </alternativeName>
    <alternativeName>
        <fullName>M-ficolin</fullName>
    </alternativeName>
</protein>
<sequence length="335" mass="36627">MWWPMLWAFPVLLCLCSSQALGQESGACPDVKIVGLGAQDKVAVIQSCPSFPGPPGPKGEPGSPAGRGERGLQGSPGKMGPPGSKGEPGTMGPPGVKGEKGERGTASPLGQKELGDALCRRGPRSCKDLLTRGIFLTGWYTIYLPDCRPLTVLCDMDVDGGGWTVFQRRVDGSINFYRDWDSYKRGFGNLGTEFWLGNDYLHLLTANGNQELRVDLREFQGQTSFAKYSSFQVSGEQEKYKLTLGQFLEGTAGDSLTKHNNMAFSTHDQDNDTNGGKNCAALFHGAWWYHDCHQSNLNGRYLPGSHESYADGINWLSGRGHRYSYKVAEMKIRAS</sequence>
<gene>
    <name type="primary">Fcn1</name>
    <name type="synonym">Fcna</name>
</gene>
<dbReference type="EMBL" id="AB026057">
    <property type="protein sequence ID" value="BAA76940.2"/>
    <property type="molecule type" value="mRNA"/>
</dbReference>
<dbReference type="SMR" id="Q9WTS8"/>
<dbReference type="FunCoup" id="Q9WTS8">
    <property type="interactions" value="1"/>
</dbReference>
<dbReference type="STRING" id="10116.ENSRNOP00000023022"/>
<dbReference type="GlyCosmos" id="Q9WTS8">
    <property type="glycosylation" value="1 site, No reported glycans"/>
</dbReference>
<dbReference type="GlyGen" id="Q9WTS8">
    <property type="glycosylation" value="1 site"/>
</dbReference>
<dbReference type="PhosphoSitePlus" id="Q9WTS8"/>
<dbReference type="PaxDb" id="10116-ENSRNOP00000023022"/>
<dbReference type="UCSC" id="RGD:621221">
    <property type="organism name" value="rat"/>
</dbReference>
<dbReference type="AGR" id="RGD:621221"/>
<dbReference type="RGD" id="621221">
    <property type="gene designation" value="Fcn1"/>
</dbReference>
<dbReference type="eggNOG" id="KOG2579">
    <property type="taxonomic scope" value="Eukaryota"/>
</dbReference>
<dbReference type="InParanoid" id="Q9WTS8"/>
<dbReference type="PhylomeDB" id="Q9WTS8"/>
<dbReference type="Reactome" id="R-RNO-166662">
    <property type="pathway name" value="Lectin pathway of complement activation"/>
</dbReference>
<dbReference type="Reactome" id="R-RNO-166663">
    <property type="pathway name" value="Initial triggering of complement"/>
</dbReference>
<dbReference type="Reactome" id="R-RNO-2855086">
    <property type="pathway name" value="Ficolins bind to repetitive carbohydrate structures on the target cell surface"/>
</dbReference>
<dbReference type="Reactome" id="R-RNO-6798695">
    <property type="pathway name" value="Neutrophil degranulation"/>
</dbReference>
<dbReference type="PRO" id="PR:Q9WTS8"/>
<dbReference type="Proteomes" id="UP000002494">
    <property type="component" value="Unplaced"/>
</dbReference>
<dbReference type="GO" id="GO:0005581">
    <property type="term" value="C:collagen trimer"/>
    <property type="evidence" value="ECO:0007669"/>
    <property type="project" value="UniProtKB-KW"/>
</dbReference>
<dbReference type="GO" id="GO:0062023">
    <property type="term" value="C:collagen-containing extracellular matrix"/>
    <property type="evidence" value="ECO:0000318"/>
    <property type="project" value="GO_Central"/>
</dbReference>
<dbReference type="GO" id="GO:0005615">
    <property type="term" value="C:extracellular space"/>
    <property type="evidence" value="ECO:0000318"/>
    <property type="project" value="GO_Central"/>
</dbReference>
<dbReference type="GO" id="GO:0005886">
    <property type="term" value="C:plasma membrane"/>
    <property type="evidence" value="ECO:0000250"/>
    <property type="project" value="UniProtKB"/>
</dbReference>
<dbReference type="GO" id="GO:0003823">
    <property type="term" value="F:antigen binding"/>
    <property type="evidence" value="ECO:0000318"/>
    <property type="project" value="GO_Central"/>
</dbReference>
<dbReference type="GO" id="GO:0030246">
    <property type="term" value="F:carbohydrate binding"/>
    <property type="evidence" value="ECO:0007669"/>
    <property type="project" value="UniProtKB-KW"/>
</dbReference>
<dbReference type="GO" id="GO:0097367">
    <property type="term" value="F:carbohydrate derivative binding"/>
    <property type="evidence" value="ECO:0000318"/>
    <property type="project" value="GO_Central"/>
</dbReference>
<dbReference type="GO" id="GO:0046872">
    <property type="term" value="F:metal ion binding"/>
    <property type="evidence" value="ECO:0007669"/>
    <property type="project" value="UniProtKB-KW"/>
</dbReference>
<dbReference type="GO" id="GO:0038187">
    <property type="term" value="F:pattern recognition receptor activity"/>
    <property type="evidence" value="ECO:0000250"/>
    <property type="project" value="UniProtKB"/>
</dbReference>
<dbReference type="GO" id="GO:0005102">
    <property type="term" value="F:signaling receptor binding"/>
    <property type="evidence" value="ECO:0000318"/>
    <property type="project" value="GO_Central"/>
</dbReference>
<dbReference type="GO" id="GO:0002752">
    <property type="term" value="P:cell surface pattern recognition receptor signaling pathway"/>
    <property type="evidence" value="ECO:0000250"/>
    <property type="project" value="UniProtKB"/>
</dbReference>
<dbReference type="GO" id="GO:0001867">
    <property type="term" value="P:complement activation, lectin pathway"/>
    <property type="evidence" value="ECO:0000318"/>
    <property type="project" value="GO_Central"/>
</dbReference>
<dbReference type="GO" id="GO:0007186">
    <property type="term" value="P:G protein-coupled receptor signaling pathway"/>
    <property type="evidence" value="ECO:0000250"/>
    <property type="project" value="UniProtKB"/>
</dbReference>
<dbReference type="GO" id="GO:0032757">
    <property type="term" value="P:positive regulation of interleukin-8 production"/>
    <property type="evidence" value="ECO:0000250"/>
    <property type="project" value="UniProtKB"/>
</dbReference>
<dbReference type="CDD" id="cd00087">
    <property type="entry name" value="FReD"/>
    <property type="match status" value="1"/>
</dbReference>
<dbReference type="FunFam" id="3.90.215.10:FF:000001">
    <property type="entry name" value="Tenascin isoform 1"/>
    <property type="match status" value="1"/>
</dbReference>
<dbReference type="Gene3D" id="3.90.215.10">
    <property type="entry name" value="Gamma Fibrinogen, chain A, domain 1"/>
    <property type="match status" value="1"/>
</dbReference>
<dbReference type="InterPro" id="IPR008160">
    <property type="entry name" value="Collagen"/>
</dbReference>
<dbReference type="InterPro" id="IPR036056">
    <property type="entry name" value="Fibrinogen-like_C"/>
</dbReference>
<dbReference type="InterPro" id="IPR014716">
    <property type="entry name" value="Fibrinogen_a/b/g_C_1"/>
</dbReference>
<dbReference type="InterPro" id="IPR002181">
    <property type="entry name" value="Fibrinogen_a/b/g_C_dom"/>
</dbReference>
<dbReference type="InterPro" id="IPR050373">
    <property type="entry name" value="Fibrinogen_C-term_domain"/>
</dbReference>
<dbReference type="InterPro" id="IPR020837">
    <property type="entry name" value="Fibrinogen_CS"/>
</dbReference>
<dbReference type="NCBIfam" id="NF040941">
    <property type="entry name" value="GGGWT_bact"/>
    <property type="match status" value="1"/>
</dbReference>
<dbReference type="PANTHER" id="PTHR19143">
    <property type="entry name" value="FIBRINOGEN/TENASCIN/ANGIOPOEITIN"/>
    <property type="match status" value="1"/>
</dbReference>
<dbReference type="PANTHER" id="PTHR19143:SF337">
    <property type="entry name" value="FICOLIN-1"/>
    <property type="match status" value="1"/>
</dbReference>
<dbReference type="Pfam" id="PF01391">
    <property type="entry name" value="Collagen"/>
    <property type="match status" value="1"/>
</dbReference>
<dbReference type="Pfam" id="PF00147">
    <property type="entry name" value="Fibrinogen_C"/>
    <property type="match status" value="1"/>
</dbReference>
<dbReference type="SMART" id="SM00186">
    <property type="entry name" value="FBG"/>
    <property type="match status" value="1"/>
</dbReference>
<dbReference type="SUPFAM" id="SSF56496">
    <property type="entry name" value="Fibrinogen C-terminal domain-like"/>
    <property type="match status" value="1"/>
</dbReference>
<dbReference type="PROSITE" id="PS00514">
    <property type="entry name" value="FIBRINOGEN_C_1"/>
    <property type="match status" value="1"/>
</dbReference>
<dbReference type="PROSITE" id="PS51406">
    <property type="entry name" value="FIBRINOGEN_C_2"/>
    <property type="match status" value="1"/>
</dbReference>
<reference key="1">
    <citation type="submission" date="1999-04" db="EMBL/GenBank/DDBJ databases">
        <title>Molecular cloning and characterization of rat ficolin-A.</title>
        <authorList>
            <person name="Yoshida Y."/>
            <person name="Tachikawa H."/>
            <person name="Fujimori Y."/>
            <person name="Miura Y."/>
            <person name="Yagasaki K."/>
            <person name="Fujimoto D."/>
            <person name="Harumiya S."/>
        </authorList>
    </citation>
    <scope>NUCLEOTIDE SEQUENCE [MRNA]</scope>
    <source>
        <strain>Sprague-Dawley</strain>
    </source>
</reference>
<proteinExistence type="evidence at transcript level"/>
<organism>
    <name type="scientific">Rattus norvegicus</name>
    <name type="common">Rat</name>
    <dbReference type="NCBI Taxonomy" id="10116"/>
    <lineage>
        <taxon>Eukaryota</taxon>
        <taxon>Metazoa</taxon>
        <taxon>Chordata</taxon>
        <taxon>Craniata</taxon>
        <taxon>Vertebrata</taxon>
        <taxon>Euteleostomi</taxon>
        <taxon>Mammalia</taxon>
        <taxon>Eutheria</taxon>
        <taxon>Euarchontoglires</taxon>
        <taxon>Glires</taxon>
        <taxon>Rodentia</taxon>
        <taxon>Myomorpha</taxon>
        <taxon>Muroidea</taxon>
        <taxon>Muridae</taxon>
        <taxon>Murinae</taxon>
        <taxon>Rattus</taxon>
    </lineage>
</organism>
<keyword id="KW-0106">Calcium</keyword>
<keyword id="KW-1003">Cell membrane</keyword>
<keyword id="KW-0176">Collagen</keyword>
<keyword id="KW-1015">Disulfide bond</keyword>
<keyword id="KW-0325">Glycoprotein</keyword>
<keyword id="KW-0391">Immunity</keyword>
<keyword id="KW-0399">Innate immunity</keyword>
<keyword id="KW-0430">Lectin</keyword>
<keyword id="KW-0472">Membrane</keyword>
<keyword id="KW-0479">Metal-binding</keyword>
<keyword id="KW-1185">Reference proteome</keyword>
<keyword id="KW-0677">Repeat</keyword>
<keyword id="KW-0964">Secreted</keyword>
<keyword id="KW-0732">Signal</keyword>
<accession>Q9WTS8</accession>
<evidence type="ECO:0000250" key="1"/>
<evidence type="ECO:0000250" key="2">
    <source>
        <dbReference type="UniProtKB" id="O00602"/>
    </source>
</evidence>
<evidence type="ECO:0000255" key="3"/>
<evidence type="ECO:0000255" key="4">
    <source>
        <dbReference type="PROSITE-ProRule" id="PRU00739"/>
    </source>
</evidence>
<evidence type="ECO:0000256" key="5">
    <source>
        <dbReference type="SAM" id="MobiDB-lite"/>
    </source>
</evidence>
<evidence type="ECO:0000305" key="6"/>